<sequence length="397" mass="44315">MFHRIEEALEDLKQGKVIIVCDDKNRENEGDFLALAEYITPETINFMITHGRGLVCVPLPEHYAKRLQLEPMVSQNTDSHHTAFTVSIDHISTTTGISAHERATTVRELLNPSSKGSDFNRPGHIFPLIAKDGGVLRRAGHTEAAVDLAKLCGTEPVGVICEIIKEDGTMARVPDLIQVAKQFDIKMITIEDLIAYRRHHETFVTKEVEITLPTEFGTFHAIGYTNSLDQKEHIALIKGDVSTDEPVLVRVHSECLTGDVFGSCRCDCGPQLHAALTQIEREGRGVLLYMRQEGRGIGLLNKLRAYKLQEEGLDTVEANEKLGFPADLRDYGIGAQILKDLGLQKLRLLTNNPRKIAGLQGYELEIVERVPLQMPTKQENKTYLQTKVTKLGHLLNL</sequence>
<proteinExistence type="inferred from homology"/>
<evidence type="ECO:0000255" key="1">
    <source>
        <dbReference type="HAMAP-Rule" id="MF_01283"/>
    </source>
</evidence>
<name>RIBBA_BACCN</name>
<comment type="function">
    <text evidence="1">Catalyzes the conversion of D-ribulose 5-phosphate to formate and 3,4-dihydroxy-2-butanone 4-phosphate.</text>
</comment>
<comment type="function">
    <text evidence="1">Catalyzes the conversion of GTP to 2,5-diamino-6-ribosylamino-4(3H)-pyrimidinone 5'-phosphate (DARP), formate and pyrophosphate.</text>
</comment>
<comment type="catalytic activity">
    <reaction evidence="1">
        <text>D-ribulose 5-phosphate = (2S)-2-hydroxy-3-oxobutyl phosphate + formate + H(+)</text>
        <dbReference type="Rhea" id="RHEA:18457"/>
        <dbReference type="ChEBI" id="CHEBI:15378"/>
        <dbReference type="ChEBI" id="CHEBI:15740"/>
        <dbReference type="ChEBI" id="CHEBI:58121"/>
        <dbReference type="ChEBI" id="CHEBI:58830"/>
        <dbReference type="EC" id="4.1.99.12"/>
    </reaction>
</comment>
<comment type="catalytic activity">
    <reaction evidence="1">
        <text>GTP + 4 H2O = 2,5-diamino-6-hydroxy-4-(5-phosphoribosylamino)-pyrimidine + formate + 2 phosphate + 3 H(+)</text>
        <dbReference type="Rhea" id="RHEA:23704"/>
        <dbReference type="ChEBI" id="CHEBI:15377"/>
        <dbReference type="ChEBI" id="CHEBI:15378"/>
        <dbReference type="ChEBI" id="CHEBI:15740"/>
        <dbReference type="ChEBI" id="CHEBI:37565"/>
        <dbReference type="ChEBI" id="CHEBI:43474"/>
        <dbReference type="ChEBI" id="CHEBI:58614"/>
        <dbReference type="EC" id="3.5.4.25"/>
    </reaction>
</comment>
<comment type="cofactor">
    <cofactor evidence="1">
        <name>Mg(2+)</name>
        <dbReference type="ChEBI" id="CHEBI:18420"/>
    </cofactor>
    <cofactor evidence="1">
        <name>Mn(2+)</name>
        <dbReference type="ChEBI" id="CHEBI:29035"/>
    </cofactor>
    <text evidence="1">Binds 2 divalent metal cations per subunit. Magnesium or manganese.</text>
</comment>
<comment type="cofactor">
    <cofactor evidence="1">
        <name>Zn(2+)</name>
        <dbReference type="ChEBI" id="CHEBI:29105"/>
    </cofactor>
    <text evidence="1">Binds 1 zinc ion per subunit.</text>
</comment>
<comment type="pathway">
    <text evidence="1">Cofactor biosynthesis; riboflavin biosynthesis; 2-hydroxy-3-oxobutyl phosphate from D-ribulose 5-phosphate: step 1/1.</text>
</comment>
<comment type="pathway">
    <text evidence="1">Cofactor biosynthesis; riboflavin biosynthesis; 5-amino-6-(D-ribitylamino)uracil from GTP: step 1/4.</text>
</comment>
<comment type="similarity">
    <text evidence="1">In the N-terminal section; belongs to the DHBP synthase family.</text>
</comment>
<comment type="similarity">
    <text evidence="1">In the C-terminal section; belongs to the GTP cyclohydrolase II family.</text>
</comment>
<dbReference type="EC" id="4.1.99.12" evidence="1"/>
<dbReference type="EC" id="3.5.4.25" evidence="1"/>
<dbReference type="EMBL" id="CP000764">
    <property type="protein sequence ID" value="ABS23043.1"/>
    <property type="molecule type" value="Genomic_DNA"/>
</dbReference>
<dbReference type="RefSeq" id="WP_012095269.1">
    <property type="nucleotide sequence ID" value="NC_009674.1"/>
</dbReference>
<dbReference type="SMR" id="A7GSD5"/>
<dbReference type="STRING" id="315749.Bcer98_2810"/>
<dbReference type="GeneID" id="33898066"/>
<dbReference type="KEGG" id="bcy:Bcer98_2810"/>
<dbReference type="eggNOG" id="COG0108">
    <property type="taxonomic scope" value="Bacteria"/>
</dbReference>
<dbReference type="eggNOG" id="COG0807">
    <property type="taxonomic scope" value="Bacteria"/>
</dbReference>
<dbReference type="HOGENOM" id="CLU_020273_1_2_9"/>
<dbReference type="OrthoDB" id="9793111at2"/>
<dbReference type="UniPathway" id="UPA00275">
    <property type="reaction ID" value="UER00399"/>
</dbReference>
<dbReference type="UniPathway" id="UPA00275">
    <property type="reaction ID" value="UER00400"/>
</dbReference>
<dbReference type="Proteomes" id="UP000002300">
    <property type="component" value="Chromosome"/>
</dbReference>
<dbReference type="GO" id="GO:0005829">
    <property type="term" value="C:cytosol"/>
    <property type="evidence" value="ECO:0007669"/>
    <property type="project" value="TreeGrafter"/>
</dbReference>
<dbReference type="GO" id="GO:0008686">
    <property type="term" value="F:3,4-dihydroxy-2-butanone-4-phosphate synthase activity"/>
    <property type="evidence" value="ECO:0007669"/>
    <property type="project" value="UniProtKB-UniRule"/>
</dbReference>
<dbReference type="GO" id="GO:0005525">
    <property type="term" value="F:GTP binding"/>
    <property type="evidence" value="ECO:0007669"/>
    <property type="project" value="UniProtKB-KW"/>
</dbReference>
<dbReference type="GO" id="GO:0003935">
    <property type="term" value="F:GTP cyclohydrolase II activity"/>
    <property type="evidence" value="ECO:0007669"/>
    <property type="project" value="UniProtKB-UniRule"/>
</dbReference>
<dbReference type="GO" id="GO:0000287">
    <property type="term" value="F:magnesium ion binding"/>
    <property type="evidence" value="ECO:0007669"/>
    <property type="project" value="UniProtKB-UniRule"/>
</dbReference>
<dbReference type="GO" id="GO:0030145">
    <property type="term" value="F:manganese ion binding"/>
    <property type="evidence" value="ECO:0007669"/>
    <property type="project" value="UniProtKB-UniRule"/>
</dbReference>
<dbReference type="GO" id="GO:0008270">
    <property type="term" value="F:zinc ion binding"/>
    <property type="evidence" value="ECO:0007669"/>
    <property type="project" value="UniProtKB-UniRule"/>
</dbReference>
<dbReference type="GO" id="GO:0009231">
    <property type="term" value="P:riboflavin biosynthetic process"/>
    <property type="evidence" value="ECO:0007669"/>
    <property type="project" value="UniProtKB-UniRule"/>
</dbReference>
<dbReference type="CDD" id="cd00641">
    <property type="entry name" value="GTP_cyclohydro2"/>
    <property type="match status" value="1"/>
</dbReference>
<dbReference type="FunFam" id="3.40.50.10990:FF:000001">
    <property type="entry name" value="Riboflavin biosynthesis protein RibBA"/>
    <property type="match status" value="1"/>
</dbReference>
<dbReference type="FunFam" id="3.90.870.10:FF:000001">
    <property type="entry name" value="Riboflavin biosynthesis protein RibBA"/>
    <property type="match status" value="1"/>
</dbReference>
<dbReference type="Gene3D" id="3.90.870.10">
    <property type="entry name" value="DHBP synthase"/>
    <property type="match status" value="1"/>
</dbReference>
<dbReference type="Gene3D" id="3.40.50.10990">
    <property type="entry name" value="GTP cyclohydrolase II"/>
    <property type="match status" value="1"/>
</dbReference>
<dbReference type="HAMAP" id="MF_00179">
    <property type="entry name" value="RibA"/>
    <property type="match status" value="1"/>
</dbReference>
<dbReference type="HAMAP" id="MF_00180">
    <property type="entry name" value="RibB"/>
    <property type="match status" value="1"/>
</dbReference>
<dbReference type="HAMAP" id="MF_01283">
    <property type="entry name" value="RibBA"/>
    <property type="match status" value="1"/>
</dbReference>
<dbReference type="InterPro" id="IPR017945">
    <property type="entry name" value="DHBP_synth_RibB-like_a/b_dom"/>
</dbReference>
<dbReference type="InterPro" id="IPR000422">
    <property type="entry name" value="DHBP_synthase_RibB"/>
</dbReference>
<dbReference type="InterPro" id="IPR032677">
    <property type="entry name" value="GTP_cyclohydro_II"/>
</dbReference>
<dbReference type="InterPro" id="IPR000926">
    <property type="entry name" value="RibA"/>
</dbReference>
<dbReference type="InterPro" id="IPR036144">
    <property type="entry name" value="RibA-like_sf"/>
</dbReference>
<dbReference type="InterPro" id="IPR016299">
    <property type="entry name" value="Riboflavin_synth_RibBA"/>
</dbReference>
<dbReference type="NCBIfam" id="NF001591">
    <property type="entry name" value="PRK00393.1"/>
    <property type="match status" value="1"/>
</dbReference>
<dbReference type="NCBIfam" id="NF006803">
    <property type="entry name" value="PRK09311.1"/>
    <property type="match status" value="1"/>
</dbReference>
<dbReference type="NCBIfam" id="TIGR00505">
    <property type="entry name" value="ribA"/>
    <property type="match status" value="1"/>
</dbReference>
<dbReference type="NCBIfam" id="TIGR00506">
    <property type="entry name" value="ribB"/>
    <property type="match status" value="1"/>
</dbReference>
<dbReference type="PANTHER" id="PTHR21327:SF18">
    <property type="entry name" value="3,4-DIHYDROXY-2-BUTANONE 4-PHOSPHATE SYNTHASE"/>
    <property type="match status" value="1"/>
</dbReference>
<dbReference type="PANTHER" id="PTHR21327">
    <property type="entry name" value="GTP CYCLOHYDROLASE II-RELATED"/>
    <property type="match status" value="1"/>
</dbReference>
<dbReference type="Pfam" id="PF00926">
    <property type="entry name" value="DHBP_synthase"/>
    <property type="match status" value="1"/>
</dbReference>
<dbReference type="Pfam" id="PF00925">
    <property type="entry name" value="GTP_cyclohydro2"/>
    <property type="match status" value="1"/>
</dbReference>
<dbReference type="PIRSF" id="PIRSF001259">
    <property type="entry name" value="RibA"/>
    <property type="match status" value="1"/>
</dbReference>
<dbReference type="SUPFAM" id="SSF142695">
    <property type="entry name" value="RibA-like"/>
    <property type="match status" value="1"/>
</dbReference>
<dbReference type="SUPFAM" id="SSF55821">
    <property type="entry name" value="YrdC/RibB"/>
    <property type="match status" value="1"/>
</dbReference>
<gene>
    <name evidence="1" type="primary">ribBA</name>
    <name type="ordered locus">Bcer98_2810</name>
</gene>
<protein>
    <recommendedName>
        <fullName evidence="1">Riboflavin biosynthesis protein RibBA</fullName>
    </recommendedName>
    <domain>
        <recommendedName>
            <fullName evidence="1">3,4-dihydroxy-2-butanone 4-phosphate synthase</fullName>
            <shortName evidence="1">DHBP synthase</shortName>
            <ecNumber evidence="1">4.1.99.12</ecNumber>
        </recommendedName>
    </domain>
    <domain>
        <recommendedName>
            <fullName evidence="1">GTP cyclohydrolase-2</fullName>
            <ecNumber evidence="1">3.5.4.25</ecNumber>
        </recommendedName>
        <alternativeName>
            <fullName evidence="1">GTP cyclohydrolase II</fullName>
        </alternativeName>
    </domain>
</protein>
<feature type="chain" id="PRO_1000085897" description="Riboflavin biosynthesis protein RibBA">
    <location>
        <begin position="1"/>
        <end position="397"/>
    </location>
</feature>
<feature type="region of interest" description="DHBP synthase">
    <location>
        <begin position="1"/>
        <end position="199"/>
    </location>
</feature>
<feature type="region of interest" description="GTP cyclohydrolase II">
    <location>
        <begin position="200"/>
        <end position="397"/>
    </location>
</feature>
<feature type="active site" description="Proton acceptor; for GTP cyclohydrolase activity" evidence="1">
    <location>
        <position position="327"/>
    </location>
</feature>
<feature type="active site" description="Nucleophile; for GTP cyclohydrolase activity" evidence="1">
    <location>
        <position position="329"/>
    </location>
</feature>
<feature type="binding site" evidence="1">
    <location>
        <begin position="26"/>
        <end position="27"/>
    </location>
    <ligand>
        <name>D-ribulose 5-phosphate</name>
        <dbReference type="ChEBI" id="CHEBI:58121"/>
    </ligand>
</feature>
<feature type="binding site" evidence="1">
    <location>
        <position position="27"/>
    </location>
    <ligand>
        <name>Mg(2+)</name>
        <dbReference type="ChEBI" id="CHEBI:18420"/>
        <label>1</label>
    </ligand>
</feature>
<feature type="binding site" evidence="1">
    <location>
        <position position="27"/>
    </location>
    <ligand>
        <name>Mg(2+)</name>
        <dbReference type="ChEBI" id="CHEBI:18420"/>
        <label>2</label>
    </ligand>
</feature>
<feature type="binding site" evidence="1">
    <location>
        <position position="31"/>
    </location>
    <ligand>
        <name>D-ribulose 5-phosphate</name>
        <dbReference type="ChEBI" id="CHEBI:58121"/>
    </ligand>
</feature>
<feature type="binding site" evidence="1">
    <location>
        <begin position="138"/>
        <end position="142"/>
    </location>
    <ligand>
        <name>D-ribulose 5-phosphate</name>
        <dbReference type="ChEBI" id="CHEBI:58121"/>
    </ligand>
</feature>
<feature type="binding site" evidence="1">
    <location>
        <position position="141"/>
    </location>
    <ligand>
        <name>Mg(2+)</name>
        <dbReference type="ChEBI" id="CHEBI:18420"/>
        <label>2</label>
    </ligand>
</feature>
<feature type="binding site" evidence="1">
    <location>
        <position position="162"/>
    </location>
    <ligand>
        <name>D-ribulose 5-phosphate</name>
        <dbReference type="ChEBI" id="CHEBI:58121"/>
    </ligand>
</feature>
<feature type="binding site" evidence="1">
    <location>
        <begin position="250"/>
        <end position="254"/>
    </location>
    <ligand>
        <name>GTP</name>
        <dbReference type="ChEBI" id="CHEBI:37565"/>
    </ligand>
</feature>
<feature type="binding site" evidence="1">
    <location>
        <position position="255"/>
    </location>
    <ligand>
        <name>Zn(2+)</name>
        <dbReference type="ChEBI" id="CHEBI:29105"/>
        <note>catalytic</note>
    </ligand>
</feature>
<feature type="binding site" evidence="1">
    <location>
        <position position="266"/>
    </location>
    <ligand>
        <name>Zn(2+)</name>
        <dbReference type="ChEBI" id="CHEBI:29105"/>
        <note>catalytic</note>
    </ligand>
</feature>
<feature type="binding site" evidence="1">
    <location>
        <position position="268"/>
    </location>
    <ligand>
        <name>Zn(2+)</name>
        <dbReference type="ChEBI" id="CHEBI:29105"/>
        <note>catalytic</note>
    </ligand>
</feature>
<feature type="binding site" evidence="1">
    <location>
        <position position="271"/>
    </location>
    <ligand>
        <name>GTP</name>
        <dbReference type="ChEBI" id="CHEBI:37565"/>
    </ligand>
</feature>
<feature type="binding site" evidence="1">
    <location>
        <begin position="293"/>
        <end position="295"/>
    </location>
    <ligand>
        <name>GTP</name>
        <dbReference type="ChEBI" id="CHEBI:37565"/>
    </ligand>
</feature>
<feature type="binding site" evidence="1">
    <location>
        <position position="315"/>
    </location>
    <ligand>
        <name>GTP</name>
        <dbReference type="ChEBI" id="CHEBI:37565"/>
    </ligand>
</feature>
<feature type="binding site" evidence="1">
    <location>
        <position position="350"/>
    </location>
    <ligand>
        <name>GTP</name>
        <dbReference type="ChEBI" id="CHEBI:37565"/>
    </ligand>
</feature>
<feature type="binding site" evidence="1">
    <location>
        <position position="355"/>
    </location>
    <ligand>
        <name>GTP</name>
        <dbReference type="ChEBI" id="CHEBI:37565"/>
    </ligand>
</feature>
<feature type="site" description="Essential for DHBP synthase activity" evidence="1">
    <location>
        <position position="124"/>
    </location>
</feature>
<feature type="site" description="Essential for DHBP synthase activity" evidence="1">
    <location>
        <position position="162"/>
    </location>
</feature>
<accession>A7GSD5</accession>
<keyword id="KW-0342">GTP-binding</keyword>
<keyword id="KW-0378">Hydrolase</keyword>
<keyword id="KW-0456">Lyase</keyword>
<keyword id="KW-0460">Magnesium</keyword>
<keyword id="KW-0464">Manganese</keyword>
<keyword id="KW-0479">Metal-binding</keyword>
<keyword id="KW-0511">Multifunctional enzyme</keyword>
<keyword id="KW-0547">Nucleotide-binding</keyword>
<keyword id="KW-0686">Riboflavin biosynthesis</keyword>
<keyword id="KW-0862">Zinc</keyword>
<reference key="1">
    <citation type="journal article" date="2008" name="Chem. Biol. Interact.">
        <title>Extending the Bacillus cereus group genomics to putative food-borne pathogens of different toxicity.</title>
        <authorList>
            <person name="Lapidus A."/>
            <person name="Goltsman E."/>
            <person name="Auger S."/>
            <person name="Galleron N."/>
            <person name="Segurens B."/>
            <person name="Dossat C."/>
            <person name="Land M.L."/>
            <person name="Broussolle V."/>
            <person name="Brillard J."/>
            <person name="Guinebretiere M.-H."/>
            <person name="Sanchis V."/>
            <person name="Nguen-the C."/>
            <person name="Lereclus D."/>
            <person name="Richardson P."/>
            <person name="Wincker P."/>
            <person name="Weissenbach J."/>
            <person name="Ehrlich S.D."/>
            <person name="Sorokin A."/>
        </authorList>
    </citation>
    <scope>NUCLEOTIDE SEQUENCE [LARGE SCALE GENOMIC DNA]</scope>
    <source>
        <strain>DSM 22905 / CIP 110041 / 391-98 / NVH 391-98</strain>
    </source>
</reference>
<organism>
    <name type="scientific">Bacillus cytotoxicus (strain DSM 22905 / CIP 110041 / 391-98 / NVH 391-98)</name>
    <dbReference type="NCBI Taxonomy" id="315749"/>
    <lineage>
        <taxon>Bacteria</taxon>
        <taxon>Bacillati</taxon>
        <taxon>Bacillota</taxon>
        <taxon>Bacilli</taxon>
        <taxon>Bacillales</taxon>
        <taxon>Bacillaceae</taxon>
        <taxon>Bacillus</taxon>
        <taxon>Bacillus cereus group</taxon>
    </lineage>
</organism>